<keyword id="KW-0997">Cell inner membrane</keyword>
<keyword id="KW-1003">Cell membrane</keyword>
<keyword id="KW-0472">Membrane</keyword>
<keyword id="KW-0511">Multifunctional enzyme</keyword>
<keyword id="KW-0520">NAD</keyword>
<keyword id="KW-0874">Quinone</keyword>
<keyword id="KW-1278">Translocase</keyword>
<keyword id="KW-0813">Transport</keyword>
<keyword id="KW-0830">Ubiquinone</keyword>
<accession>C3JY83</accession>
<evidence type="ECO:0000255" key="1">
    <source>
        <dbReference type="HAMAP-Rule" id="MF_01359"/>
    </source>
</evidence>
<gene>
    <name evidence="1" type="primary">nuoC</name>
    <name evidence="1" type="synonym">nuoCD</name>
    <name evidence="1" type="synonym">nuoD</name>
    <name type="ordered locus">PFLU_3820</name>
</gene>
<reference key="1">
    <citation type="journal article" date="2009" name="Genome Biol.">
        <title>Genomic and genetic analyses of diversity and plant interactions of Pseudomonas fluorescens.</title>
        <authorList>
            <person name="Silby M.W."/>
            <person name="Cerdeno-Tarraga A.M."/>
            <person name="Vernikos G.S."/>
            <person name="Giddens S.R."/>
            <person name="Jackson R.W."/>
            <person name="Preston G.M."/>
            <person name="Zhang X.-X."/>
            <person name="Moon C.D."/>
            <person name="Gehrig S.M."/>
            <person name="Godfrey S.A.C."/>
            <person name="Knight C.G."/>
            <person name="Malone J.G."/>
            <person name="Robinson Z."/>
            <person name="Spiers A.J."/>
            <person name="Harris S."/>
            <person name="Challis G.L."/>
            <person name="Yaxley A.M."/>
            <person name="Harris D."/>
            <person name="Seeger K."/>
            <person name="Murphy L."/>
            <person name="Rutter S."/>
            <person name="Squares R."/>
            <person name="Quail M.A."/>
            <person name="Saunders E."/>
            <person name="Mavromatis K."/>
            <person name="Brettin T.S."/>
            <person name="Bentley S.D."/>
            <person name="Hothersall J."/>
            <person name="Stephens E."/>
            <person name="Thomas C.M."/>
            <person name="Parkhill J."/>
            <person name="Levy S.B."/>
            <person name="Rainey P.B."/>
            <person name="Thomson N.R."/>
        </authorList>
    </citation>
    <scope>NUCLEOTIDE SEQUENCE [LARGE SCALE GENOMIC DNA]</scope>
    <source>
        <strain>SBW25</strain>
    </source>
</reference>
<feature type="chain" id="PRO_1000214872" description="NADH-quinone oxidoreductase subunit C/D">
    <location>
        <begin position="1"/>
        <end position="594"/>
    </location>
</feature>
<feature type="region of interest" description="NADH dehydrogenase I subunit C" evidence="1">
    <location>
        <begin position="1"/>
        <end position="185"/>
    </location>
</feature>
<feature type="region of interest" description="NADH dehydrogenase I subunit D" evidence="1">
    <location>
        <begin position="209"/>
        <end position="594"/>
    </location>
</feature>
<proteinExistence type="inferred from homology"/>
<name>NUOCD_PSEFS</name>
<organism>
    <name type="scientific">Pseudomonas fluorescens (strain SBW25)</name>
    <dbReference type="NCBI Taxonomy" id="216595"/>
    <lineage>
        <taxon>Bacteria</taxon>
        <taxon>Pseudomonadati</taxon>
        <taxon>Pseudomonadota</taxon>
        <taxon>Gammaproteobacteria</taxon>
        <taxon>Pseudomonadales</taxon>
        <taxon>Pseudomonadaceae</taxon>
        <taxon>Pseudomonas</taxon>
    </lineage>
</organism>
<comment type="function">
    <text evidence="1">NDH-1 shuttles electrons from NADH, via FMN and iron-sulfur (Fe-S) centers, to quinones in the respiratory chain. The immediate electron acceptor for the enzyme in this species is believed to be ubiquinone. Couples the redox reaction to proton translocation (for every two electrons transferred, four hydrogen ions are translocated across the cytoplasmic membrane), and thus conserves the redox energy in a proton gradient.</text>
</comment>
<comment type="catalytic activity">
    <reaction evidence="1">
        <text>a quinone + NADH + 5 H(+)(in) = a quinol + NAD(+) + 4 H(+)(out)</text>
        <dbReference type="Rhea" id="RHEA:57888"/>
        <dbReference type="ChEBI" id="CHEBI:15378"/>
        <dbReference type="ChEBI" id="CHEBI:24646"/>
        <dbReference type="ChEBI" id="CHEBI:57540"/>
        <dbReference type="ChEBI" id="CHEBI:57945"/>
        <dbReference type="ChEBI" id="CHEBI:132124"/>
    </reaction>
</comment>
<comment type="subunit">
    <text evidence="1">NDH-1 is composed of 13 different subunits. Subunits NuoB, CD, E, F, and G constitute the peripheral sector of the complex.</text>
</comment>
<comment type="subcellular location">
    <subcellularLocation>
        <location evidence="1">Cell inner membrane</location>
        <topology evidence="1">Peripheral membrane protein</topology>
        <orientation evidence="1">Cytoplasmic side</orientation>
    </subcellularLocation>
</comment>
<comment type="similarity">
    <text evidence="1">In the N-terminal section; belongs to the complex I 30 kDa subunit family.</text>
</comment>
<comment type="similarity">
    <text evidence="1">In the C-terminal section; belongs to the complex I 49 kDa subunit family.</text>
</comment>
<dbReference type="EC" id="7.1.1.-" evidence="1"/>
<dbReference type="EMBL" id="AM181176">
    <property type="protein sequence ID" value="CAY50140.1"/>
    <property type="molecule type" value="Genomic_DNA"/>
</dbReference>
<dbReference type="RefSeq" id="WP_012724952.1">
    <property type="nucleotide sequence ID" value="NC_012660.1"/>
</dbReference>
<dbReference type="SMR" id="C3JY83"/>
<dbReference type="STRING" id="294.SRM1_03447"/>
<dbReference type="eggNOG" id="COG0649">
    <property type="taxonomic scope" value="Bacteria"/>
</dbReference>
<dbReference type="eggNOG" id="COG0852">
    <property type="taxonomic scope" value="Bacteria"/>
</dbReference>
<dbReference type="HOGENOM" id="CLU_015134_3_2_6"/>
<dbReference type="OrthoDB" id="9801496at2"/>
<dbReference type="GO" id="GO:0030964">
    <property type="term" value="C:NADH dehydrogenase complex"/>
    <property type="evidence" value="ECO:0007669"/>
    <property type="project" value="InterPro"/>
</dbReference>
<dbReference type="GO" id="GO:0005886">
    <property type="term" value="C:plasma membrane"/>
    <property type="evidence" value="ECO:0007669"/>
    <property type="project" value="UniProtKB-SubCell"/>
</dbReference>
<dbReference type="GO" id="GO:0051287">
    <property type="term" value="F:NAD binding"/>
    <property type="evidence" value="ECO:0007669"/>
    <property type="project" value="InterPro"/>
</dbReference>
<dbReference type="GO" id="GO:0008137">
    <property type="term" value="F:NADH dehydrogenase (ubiquinone) activity"/>
    <property type="evidence" value="ECO:0007669"/>
    <property type="project" value="InterPro"/>
</dbReference>
<dbReference type="GO" id="GO:0050136">
    <property type="term" value="F:NADH:ubiquinone reductase (non-electrogenic) activity"/>
    <property type="evidence" value="ECO:0007669"/>
    <property type="project" value="UniProtKB-UniRule"/>
</dbReference>
<dbReference type="GO" id="GO:0048038">
    <property type="term" value="F:quinone binding"/>
    <property type="evidence" value="ECO:0007669"/>
    <property type="project" value="UniProtKB-KW"/>
</dbReference>
<dbReference type="FunFam" id="1.10.645.10:FF:000001">
    <property type="entry name" value="NADH-quinone oxidoreductase subunit C/D"/>
    <property type="match status" value="1"/>
</dbReference>
<dbReference type="FunFam" id="3.30.460.80:FF:000001">
    <property type="entry name" value="NADH-quinone oxidoreductase subunit C/D"/>
    <property type="match status" value="1"/>
</dbReference>
<dbReference type="Gene3D" id="1.10.645.10">
    <property type="entry name" value="Cytochrome-c3 Hydrogenase, chain B"/>
    <property type="match status" value="1"/>
</dbReference>
<dbReference type="Gene3D" id="3.30.460.80">
    <property type="entry name" value="NADH:ubiquinone oxidoreductase, 30kDa subunit"/>
    <property type="match status" value="1"/>
</dbReference>
<dbReference type="HAMAP" id="MF_01357">
    <property type="entry name" value="NDH1_NuoC"/>
    <property type="match status" value="1"/>
</dbReference>
<dbReference type="HAMAP" id="MF_01359">
    <property type="entry name" value="NDH1_NuoCD_1"/>
    <property type="match status" value="1"/>
</dbReference>
<dbReference type="HAMAP" id="MF_01358">
    <property type="entry name" value="NDH1_NuoD"/>
    <property type="match status" value="1"/>
</dbReference>
<dbReference type="InterPro" id="IPR010218">
    <property type="entry name" value="NADH_DH_suC"/>
</dbReference>
<dbReference type="InterPro" id="IPR023062">
    <property type="entry name" value="NADH_DH_suCD"/>
</dbReference>
<dbReference type="InterPro" id="IPR001135">
    <property type="entry name" value="NADH_Q_OxRdtase_suD"/>
</dbReference>
<dbReference type="InterPro" id="IPR037232">
    <property type="entry name" value="NADH_quin_OxRdtase_su_C/D-like"/>
</dbReference>
<dbReference type="InterPro" id="IPR001268">
    <property type="entry name" value="NADH_UbQ_OxRdtase_30kDa_su"/>
</dbReference>
<dbReference type="InterPro" id="IPR014029">
    <property type="entry name" value="NADH_UbQ_OxRdtase_49kDa_CS"/>
</dbReference>
<dbReference type="InterPro" id="IPR022885">
    <property type="entry name" value="NDH1_su_D/H"/>
</dbReference>
<dbReference type="InterPro" id="IPR029014">
    <property type="entry name" value="NiFe-Hase_large"/>
</dbReference>
<dbReference type="NCBIfam" id="TIGR01961">
    <property type="entry name" value="NuoC_fam"/>
    <property type="match status" value="1"/>
</dbReference>
<dbReference type="NCBIfam" id="TIGR01962">
    <property type="entry name" value="NuoD"/>
    <property type="match status" value="1"/>
</dbReference>
<dbReference type="NCBIfam" id="NF004739">
    <property type="entry name" value="PRK06075.1"/>
    <property type="match status" value="1"/>
</dbReference>
<dbReference type="NCBIfam" id="NF008728">
    <property type="entry name" value="PRK11742.1"/>
    <property type="match status" value="1"/>
</dbReference>
<dbReference type="PANTHER" id="PTHR11993:SF45">
    <property type="entry name" value="NADH-QUINONE OXIDOREDUCTASE SUBUNIT C_D"/>
    <property type="match status" value="1"/>
</dbReference>
<dbReference type="PANTHER" id="PTHR11993">
    <property type="entry name" value="NADH-UBIQUINONE OXIDOREDUCTASE 49 KDA SUBUNIT"/>
    <property type="match status" value="1"/>
</dbReference>
<dbReference type="Pfam" id="PF00329">
    <property type="entry name" value="Complex1_30kDa"/>
    <property type="match status" value="1"/>
</dbReference>
<dbReference type="Pfam" id="PF00346">
    <property type="entry name" value="Complex1_49kDa"/>
    <property type="match status" value="1"/>
</dbReference>
<dbReference type="SUPFAM" id="SSF56762">
    <property type="entry name" value="HydB/Nqo4-like"/>
    <property type="match status" value="1"/>
</dbReference>
<dbReference type="SUPFAM" id="SSF143243">
    <property type="entry name" value="Nqo5-like"/>
    <property type="match status" value="1"/>
</dbReference>
<dbReference type="PROSITE" id="PS00535">
    <property type="entry name" value="COMPLEX1_49K"/>
    <property type="match status" value="1"/>
</dbReference>
<protein>
    <recommendedName>
        <fullName evidence="1">NADH-quinone oxidoreductase subunit C/D</fullName>
        <ecNumber evidence="1">7.1.1.-</ecNumber>
    </recommendedName>
    <alternativeName>
        <fullName evidence="1">NADH dehydrogenase I subunit C/D</fullName>
    </alternativeName>
    <alternativeName>
        <fullName evidence="1">NDH-1 subunit C/D</fullName>
    </alternativeName>
</protein>
<sequence length="594" mass="67703">MTTGSALYIPPYKADDQDVVVELNNRFGPDAFTAQATRTGMPVLWVARAKLVEVLTFLRNLPKPYVMLYDLHGVDERLRTKRQGLPSGADFTVFYHLLSIERNSDVMIKVALSESDLSVPTVTGIWPNASWYEREVWDMFGIDFPGHPHLTRIMMPPTWEGHPLRKDFPARATEFDPFSLNLAKQQLEEEAARFRPEDWGMKRSGTNEDYMFLNLGPNHPSAHGAFRIILQLDGEEIVDCVPDIGYHHRGAEKMAERQSWHSFIPYTDRIDYLGGVMNNLPYVLSVEKLAGIKVPDRVDTIRIMMAEFFRITSHLLFLGTYIQDVGAMTPVFFTFTDRQRAYKVIEAITGFRLHPAWYRIGGVAHDLPNGWERLVKEFIDWMPKRLDEYQKAALDNSILKGRTIGVAAYNTKEALEWGVTGAGLRSTGCDFDLRKARPYSGYENFEFEVPLAANGDAYDRCIVRVEEMRQSLKIIEQCMRNMPAGPYKADHPLTTPPPKERTLQHIETLITHFLQVSWGPVMPANESFQMIEATKGINSYYLTSDGGTMSYRTRIRTPSFPHLQQIPSVIKGEMVADLIAYLGSIDFVMADVDR</sequence>